<protein>
    <recommendedName>
        <fullName>Cyanophycinase</fullName>
        <ecNumber>3.4.15.6</ecNumber>
    </recommendedName>
</protein>
<reference key="1">
    <citation type="journal article" date="2002" name="DNA Res.">
        <title>Complete genome structure of the thermophilic cyanobacterium Thermosynechococcus elongatus BP-1.</title>
        <authorList>
            <person name="Nakamura Y."/>
            <person name="Kaneko T."/>
            <person name="Sato S."/>
            <person name="Ikeuchi M."/>
            <person name="Katoh H."/>
            <person name="Sasamoto S."/>
            <person name="Watanabe A."/>
            <person name="Iriguchi M."/>
            <person name="Kawashima K."/>
            <person name="Kimura T."/>
            <person name="Kishida Y."/>
            <person name="Kiyokawa C."/>
            <person name="Kohara M."/>
            <person name="Matsumoto M."/>
            <person name="Matsuno A."/>
            <person name="Nakazaki N."/>
            <person name="Shimpo S."/>
            <person name="Sugimoto M."/>
            <person name="Takeuchi C."/>
            <person name="Yamada M."/>
            <person name="Tabata S."/>
        </authorList>
    </citation>
    <scope>NUCLEOTIDE SEQUENCE [LARGE SCALE GENOMIC DNA]</scope>
    <source>
        <strain>NIES-2133 / IAM M-273 / BP-1</strain>
    </source>
</reference>
<sequence length="322" mass="35503">MLYRIPVSTVGYWHSPWQIHQFLLPIERFIHRNPMLQLDPISKTTHQHSGHKGLVMAIGGAEDKVRGRQILTTFCQRAGGLDAVIGVIPSASREPDAMGRLYHDIFRDIGVREVDILLVGDRADAEQEEMLARLSRCTGIFMSGGDQLRLSALLDETPLLYQLRHQVWEGKSILGGTSAGAAVLGECMIASGGSNEAPNRSLVDLATGLGILPDVLVDQHFHNRNRLARLISAISAHPDKLGVGIDEDTCAMFEADGTLRVLGRGSVTIVDPRDVSYTNYAHVDVNEPLSIYNLRLHILSDGDCYNLRTHQVQHKCILPPLN</sequence>
<organism>
    <name type="scientific">Thermosynechococcus vestitus (strain NIES-2133 / IAM M-273 / BP-1)</name>
    <dbReference type="NCBI Taxonomy" id="197221"/>
    <lineage>
        <taxon>Bacteria</taxon>
        <taxon>Bacillati</taxon>
        <taxon>Cyanobacteriota</taxon>
        <taxon>Cyanophyceae</taxon>
        <taxon>Acaryochloridales</taxon>
        <taxon>Thermosynechococcaceae</taxon>
        <taxon>Thermosynechococcus</taxon>
    </lineage>
</organism>
<keyword id="KW-0378">Hydrolase</keyword>
<keyword id="KW-0645">Protease</keyword>
<keyword id="KW-1185">Reference proteome</keyword>
<keyword id="KW-0720">Serine protease</keyword>
<evidence type="ECO:0000250" key="1"/>
<evidence type="ECO:0000305" key="2"/>
<comment type="function">
    <text evidence="1">Exopeptidase that catalyzes the hydrolytic cleavage of multi-L-arginyl-poly-L-aspartic acid (cyanophycin; a water-insoluble reserve polymer) into aspartate-arginine dipeptides.</text>
</comment>
<comment type="catalytic activity">
    <reaction>
        <text>[L-4-(L-arginin-2-N-yl)aspartate](n) + H2O = [L-4-(L-arginin-2-N-yl)aspartate](n-1) + L-4-(L-arginin-2-N-yl)aspartate</text>
        <dbReference type="Rhea" id="RHEA:12845"/>
        <dbReference type="Rhea" id="RHEA-COMP:13728"/>
        <dbReference type="Rhea" id="RHEA-COMP:13734"/>
        <dbReference type="ChEBI" id="CHEBI:15377"/>
        <dbReference type="ChEBI" id="CHEBI:137986"/>
        <dbReference type="ChEBI" id="CHEBI:137991"/>
        <dbReference type="EC" id="3.4.15.6"/>
    </reaction>
</comment>
<comment type="similarity">
    <text evidence="2">Belongs to the peptidase S51 family.</text>
</comment>
<gene>
    <name type="primary">cphB</name>
    <name type="ordered locus">tlr2169</name>
</gene>
<dbReference type="EC" id="3.4.15.6"/>
<dbReference type="EMBL" id="BA000039">
    <property type="protein sequence ID" value="BAC09721.1"/>
    <property type="molecule type" value="Genomic_DNA"/>
</dbReference>
<dbReference type="RefSeq" id="NP_682959.1">
    <property type="nucleotide sequence ID" value="NC_004113.1"/>
</dbReference>
<dbReference type="RefSeq" id="WP_011058003.1">
    <property type="nucleotide sequence ID" value="NC_004113.1"/>
</dbReference>
<dbReference type="SMR" id="P0C8P3"/>
<dbReference type="STRING" id="197221.gene:10748780"/>
<dbReference type="EnsemblBacteria" id="BAC09721">
    <property type="protein sequence ID" value="BAC09721"/>
    <property type="gene ID" value="BAC09721"/>
</dbReference>
<dbReference type="KEGG" id="tel:tlr2169"/>
<dbReference type="PATRIC" id="fig|197221.4.peg.2273"/>
<dbReference type="eggNOG" id="COG4242">
    <property type="taxonomic scope" value="Bacteria"/>
</dbReference>
<dbReference type="BRENDA" id="3.4.15.6">
    <property type="organism ID" value="7763"/>
</dbReference>
<dbReference type="Proteomes" id="UP000000440">
    <property type="component" value="Chromosome"/>
</dbReference>
<dbReference type="GO" id="GO:0008241">
    <property type="term" value="F:peptidyl-dipeptidase activity"/>
    <property type="evidence" value="ECO:0007669"/>
    <property type="project" value="UniProtKB-EC"/>
</dbReference>
<dbReference type="GO" id="GO:0008236">
    <property type="term" value="F:serine-type peptidase activity"/>
    <property type="evidence" value="ECO:0007669"/>
    <property type="project" value="UniProtKB-KW"/>
</dbReference>
<dbReference type="GO" id="GO:0006508">
    <property type="term" value="P:proteolysis"/>
    <property type="evidence" value="ECO:0007669"/>
    <property type="project" value="UniProtKB-KW"/>
</dbReference>
<dbReference type="CDD" id="cd03145">
    <property type="entry name" value="GAT1_cyanophycinase"/>
    <property type="match status" value="1"/>
</dbReference>
<dbReference type="Gene3D" id="3.40.50.880">
    <property type="match status" value="1"/>
</dbReference>
<dbReference type="InterPro" id="IPR029062">
    <property type="entry name" value="Class_I_gatase-like"/>
</dbReference>
<dbReference type="InterPro" id="IPR005320">
    <property type="entry name" value="Peptidase_S51"/>
</dbReference>
<dbReference type="InterPro" id="IPR011811">
    <property type="entry name" value="Peptidase_S51_cyanophycinase"/>
</dbReference>
<dbReference type="NCBIfam" id="TIGR02069">
    <property type="entry name" value="cyanophycinase"/>
    <property type="match status" value="1"/>
</dbReference>
<dbReference type="PANTHER" id="PTHR36175">
    <property type="entry name" value="CYANOPHYCINASE"/>
    <property type="match status" value="1"/>
</dbReference>
<dbReference type="PANTHER" id="PTHR36175:SF1">
    <property type="entry name" value="CYANOPHYCINASE"/>
    <property type="match status" value="1"/>
</dbReference>
<dbReference type="Pfam" id="PF03575">
    <property type="entry name" value="Peptidase_S51"/>
    <property type="match status" value="1"/>
</dbReference>
<dbReference type="PIRSF" id="PIRSF032067">
    <property type="entry name" value="Cyanophycinase"/>
    <property type="match status" value="1"/>
</dbReference>
<dbReference type="SUPFAM" id="SSF52317">
    <property type="entry name" value="Class I glutamine amidotransferase-like"/>
    <property type="match status" value="1"/>
</dbReference>
<proteinExistence type="inferred from homology"/>
<feature type="chain" id="PRO_0000361775" description="Cyanophycinase">
    <location>
        <begin position="1"/>
        <end position="322"/>
    </location>
</feature>
<feature type="active site" description="Charge relay system" evidence="1">
    <location>
        <position position="178"/>
    </location>
</feature>
<feature type="active site" description="Charge relay system" evidence="1">
    <location>
        <position position="196"/>
    </location>
</feature>
<feature type="active site" description="Charge relay system" evidence="1">
    <location>
        <position position="220"/>
    </location>
</feature>
<name>CPHB_THEVB</name>
<accession>P0C8P3</accession>
<accession>Q9F2I8</accession>